<reference key="1">
    <citation type="submission" date="2006-03" db="EMBL/GenBank/DDBJ databases">
        <title>Complete sequence of Rhodopseudomonas palustris BisB5.</title>
        <authorList>
            <consortium name="US DOE Joint Genome Institute"/>
            <person name="Copeland A."/>
            <person name="Lucas S."/>
            <person name="Lapidus A."/>
            <person name="Barry K."/>
            <person name="Detter J.C."/>
            <person name="Glavina del Rio T."/>
            <person name="Hammon N."/>
            <person name="Israni S."/>
            <person name="Dalin E."/>
            <person name="Tice H."/>
            <person name="Pitluck S."/>
            <person name="Chain P."/>
            <person name="Malfatti S."/>
            <person name="Shin M."/>
            <person name="Vergez L."/>
            <person name="Schmutz J."/>
            <person name="Larimer F."/>
            <person name="Land M."/>
            <person name="Hauser L."/>
            <person name="Pelletier D.A."/>
            <person name="Kyrpides N."/>
            <person name="Lykidis A."/>
            <person name="Oda Y."/>
            <person name="Harwood C.S."/>
            <person name="Richardson P."/>
        </authorList>
    </citation>
    <scope>NUCLEOTIDE SEQUENCE [LARGE SCALE GENOMIC DNA]</scope>
    <source>
        <strain>BisB5</strain>
    </source>
</reference>
<organism>
    <name type="scientific">Rhodopseudomonas palustris (strain BisB5)</name>
    <dbReference type="NCBI Taxonomy" id="316057"/>
    <lineage>
        <taxon>Bacteria</taxon>
        <taxon>Pseudomonadati</taxon>
        <taxon>Pseudomonadota</taxon>
        <taxon>Alphaproteobacteria</taxon>
        <taxon>Hyphomicrobiales</taxon>
        <taxon>Nitrobacteraceae</taxon>
        <taxon>Rhodopseudomonas</taxon>
    </lineage>
</organism>
<keyword id="KW-0028">Amino-acid biosynthesis</keyword>
<keyword id="KW-0055">Arginine biosynthesis</keyword>
<keyword id="KW-0067">ATP-binding</keyword>
<keyword id="KW-0963">Cytoplasm</keyword>
<keyword id="KW-0436">Ligase</keyword>
<keyword id="KW-0547">Nucleotide-binding</keyword>
<accession>Q13D88</accession>
<name>ASSY_RHOPS</name>
<comment type="catalytic activity">
    <reaction evidence="1">
        <text>L-citrulline + L-aspartate + ATP = 2-(N(omega)-L-arginino)succinate + AMP + diphosphate + H(+)</text>
        <dbReference type="Rhea" id="RHEA:10932"/>
        <dbReference type="ChEBI" id="CHEBI:15378"/>
        <dbReference type="ChEBI" id="CHEBI:29991"/>
        <dbReference type="ChEBI" id="CHEBI:30616"/>
        <dbReference type="ChEBI" id="CHEBI:33019"/>
        <dbReference type="ChEBI" id="CHEBI:57472"/>
        <dbReference type="ChEBI" id="CHEBI:57743"/>
        <dbReference type="ChEBI" id="CHEBI:456215"/>
        <dbReference type="EC" id="6.3.4.5"/>
    </reaction>
</comment>
<comment type="pathway">
    <text evidence="1">Amino-acid biosynthesis; L-arginine biosynthesis; L-arginine from L-ornithine and carbamoyl phosphate: step 2/3.</text>
</comment>
<comment type="subunit">
    <text evidence="1">Homotetramer.</text>
</comment>
<comment type="subcellular location">
    <subcellularLocation>
        <location evidence="1">Cytoplasm</location>
    </subcellularLocation>
</comment>
<comment type="similarity">
    <text evidence="1">Belongs to the argininosuccinate synthase family. Type 2 subfamily.</text>
</comment>
<evidence type="ECO:0000255" key="1">
    <source>
        <dbReference type="HAMAP-Rule" id="MF_00581"/>
    </source>
</evidence>
<protein>
    <recommendedName>
        <fullName evidence="1">Argininosuccinate synthase</fullName>
        <ecNumber evidence="1">6.3.4.5</ecNumber>
    </recommendedName>
    <alternativeName>
        <fullName evidence="1">Citrulline--aspartate ligase</fullName>
    </alternativeName>
</protein>
<feature type="chain" id="PRO_1000025439" description="Argininosuccinate synthase">
    <location>
        <begin position="1"/>
        <end position="445"/>
    </location>
</feature>
<feature type="binding site" evidence="1">
    <location>
        <begin position="17"/>
        <end position="25"/>
    </location>
    <ligand>
        <name>ATP</name>
        <dbReference type="ChEBI" id="CHEBI:30616"/>
    </ligand>
</feature>
<feature type="binding site" evidence="1">
    <location>
        <position position="43"/>
    </location>
    <ligand>
        <name>ATP</name>
        <dbReference type="ChEBI" id="CHEBI:30616"/>
    </ligand>
</feature>
<feature type="binding site" evidence="1">
    <location>
        <position position="99"/>
    </location>
    <ligand>
        <name>L-citrulline</name>
        <dbReference type="ChEBI" id="CHEBI:57743"/>
    </ligand>
</feature>
<feature type="binding site" evidence="1">
    <location>
        <position position="129"/>
    </location>
    <ligand>
        <name>ATP</name>
        <dbReference type="ChEBI" id="CHEBI:30616"/>
    </ligand>
</feature>
<feature type="binding site" evidence="1">
    <location>
        <position position="131"/>
    </location>
    <ligand>
        <name>ATP</name>
        <dbReference type="ChEBI" id="CHEBI:30616"/>
    </ligand>
</feature>
<feature type="binding site" evidence="1">
    <location>
        <position position="131"/>
    </location>
    <ligand>
        <name>L-aspartate</name>
        <dbReference type="ChEBI" id="CHEBI:29991"/>
    </ligand>
</feature>
<feature type="binding site" evidence="1">
    <location>
        <position position="135"/>
    </location>
    <ligand>
        <name>L-aspartate</name>
        <dbReference type="ChEBI" id="CHEBI:29991"/>
    </ligand>
</feature>
<feature type="binding site" evidence="1">
    <location>
        <position position="135"/>
    </location>
    <ligand>
        <name>L-citrulline</name>
        <dbReference type="ChEBI" id="CHEBI:57743"/>
    </ligand>
</feature>
<feature type="binding site" evidence="1">
    <location>
        <position position="136"/>
    </location>
    <ligand>
        <name>ATP</name>
        <dbReference type="ChEBI" id="CHEBI:30616"/>
    </ligand>
</feature>
<feature type="binding site" evidence="1">
    <location>
        <position position="136"/>
    </location>
    <ligand>
        <name>L-aspartate</name>
        <dbReference type="ChEBI" id="CHEBI:29991"/>
    </ligand>
</feature>
<feature type="binding site" evidence="1">
    <location>
        <position position="139"/>
    </location>
    <ligand>
        <name>L-citrulline</name>
        <dbReference type="ChEBI" id="CHEBI:57743"/>
    </ligand>
</feature>
<feature type="binding site" evidence="1">
    <location>
        <position position="192"/>
    </location>
    <ligand>
        <name>L-citrulline</name>
        <dbReference type="ChEBI" id="CHEBI:57743"/>
    </ligand>
</feature>
<feature type="binding site" evidence="1">
    <location>
        <position position="194"/>
    </location>
    <ligand>
        <name>ATP</name>
        <dbReference type="ChEBI" id="CHEBI:30616"/>
    </ligand>
</feature>
<feature type="binding site" evidence="1">
    <location>
        <position position="201"/>
    </location>
    <ligand>
        <name>L-citrulline</name>
        <dbReference type="ChEBI" id="CHEBI:57743"/>
    </ligand>
</feature>
<feature type="binding site" evidence="1">
    <location>
        <position position="203"/>
    </location>
    <ligand>
        <name>L-citrulline</name>
        <dbReference type="ChEBI" id="CHEBI:57743"/>
    </ligand>
</feature>
<feature type="binding site" evidence="1">
    <location>
        <position position="280"/>
    </location>
    <ligand>
        <name>L-citrulline</name>
        <dbReference type="ChEBI" id="CHEBI:57743"/>
    </ligand>
</feature>
<sequence length="445" mass="49058">MTTILKSLPKGENVGIAFSGGLDTSAALLWMKQKGARVFAYTANLGQPDEADYDEIPRKAMEFGAEKARLVDCRSQLVHEGIAAIQSGAFHVSTGGIAYFNTTPLGRAVTGTMLVSAMKEDGVNIWGDGSTYKGNDIERFYRYGLLTNPELRIYKPWLDQQFIDELGGRAEMSAFMTAHGFAYKMSAEKAYSTDSNLLGATHEAKDLEHLDSGIKIVNPIMGVPFWRDDCAVKAETVTVRFEEGQPVALNGQSFADPVALFLEANAIGGRHGLGMSDQIENRIIEAKSRGIYEAPGMALLHIAYERLVTGIHNEDTIEQYRISGMRLGRLLYQGRWFDSQALMLRETAQRWVARAITGEVTLELRRGNDYSIMNTESPNLTYAPERLSMEKVEDAPFTPGDRIGQLTMRNLDIADTRAKLDIFAKAGLLSAGEGSHIPKLENDKG</sequence>
<dbReference type="EC" id="6.3.4.5" evidence="1"/>
<dbReference type="EMBL" id="CP000283">
    <property type="protein sequence ID" value="ABE37951.1"/>
    <property type="molecule type" value="Genomic_DNA"/>
</dbReference>
<dbReference type="SMR" id="Q13D88"/>
<dbReference type="STRING" id="316057.RPD_0713"/>
<dbReference type="KEGG" id="rpd:RPD_0713"/>
<dbReference type="eggNOG" id="COG0137">
    <property type="taxonomic scope" value="Bacteria"/>
</dbReference>
<dbReference type="HOGENOM" id="CLU_032784_4_1_5"/>
<dbReference type="BioCyc" id="RPAL316057:RPD_RS03640-MONOMER"/>
<dbReference type="UniPathway" id="UPA00068">
    <property type="reaction ID" value="UER00113"/>
</dbReference>
<dbReference type="Proteomes" id="UP000001818">
    <property type="component" value="Chromosome"/>
</dbReference>
<dbReference type="GO" id="GO:0005737">
    <property type="term" value="C:cytoplasm"/>
    <property type="evidence" value="ECO:0007669"/>
    <property type="project" value="UniProtKB-SubCell"/>
</dbReference>
<dbReference type="GO" id="GO:0004055">
    <property type="term" value="F:argininosuccinate synthase activity"/>
    <property type="evidence" value="ECO:0007669"/>
    <property type="project" value="UniProtKB-UniRule"/>
</dbReference>
<dbReference type="GO" id="GO:0005524">
    <property type="term" value="F:ATP binding"/>
    <property type="evidence" value="ECO:0007669"/>
    <property type="project" value="UniProtKB-UniRule"/>
</dbReference>
<dbReference type="GO" id="GO:0042803">
    <property type="term" value="F:protein homodimerization activity"/>
    <property type="evidence" value="ECO:0007669"/>
    <property type="project" value="InterPro"/>
</dbReference>
<dbReference type="GO" id="GO:0000053">
    <property type="term" value="P:argininosuccinate metabolic process"/>
    <property type="evidence" value="ECO:0007669"/>
    <property type="project" value="TreeGrafter"/>
</dbReference>
<dbReference type="GO" id="GO:0006526">
    <property type="term" value="P:L-arginine biosynthetic process"/>
    <property type="evidence" value="ECO:0007669"/>
    <property type="project" value="UniProtKB-UniRule"/>
</dbReference>
<dbReference type="GO" id="GO:0000050">
    <property type="term" value="P:urea cycle"/>
    <property type="evidence" value="ECO:0007669"/>
    <property type="project" value="TreeGrafter"/>
</dbReference>
<dbReference type="CDD" id="cd01999">
    <property type="entry name" value="ASS"/>
    <property type="match status" value="1"/>
</dbReference>
<dbReference type="FunFam" id="1.10.287.400:FF:000001">
    <property type="entry name" value="Argininosuccinate synthase"/>
    <property type="match status" value="1"/>
</dbReference>
<dbReference type="Gene3D" id="1.10.287.400">
    <property type="match status" value="1"/>
</dbReference>
<dbReference type="Gene3D" id="3.90.1260.10">
    <property type="entry name" value="Argininosuccinate synthetase, chain A, domain 2"/>
    <property type="match status" value="1"/>
</dbReference>
<dbReference type="Gene3D" id="3.40.50.620">
    <property type="entry name" value="HUPs"/>
    <property type="match status" value="1"/>
</dbReference>
<dbReference type="HAMAP" id="MF_00581">
    <property type="entry name" value="Arg_succ_synth_type2"/>
    <property type="match status" value="1"/>
</dbReference>
<dbReference type="InterPro" id="IPR023437">
    <property type="entry name" value="Arg_succ_synth_type2_subfam"/>
</dbReference>
<dbReference type="InterPro" id="IPR048268">
    <property type="entry name" value="Arginosuc_syn_C"/>
</dbReference>
<dbReference type="InterPro" id="IPR048267">
    <property type="entry name" value="Arginosuc_syn_N"/>
</dbReference>
<dbReference type="InterPro" id="IPR001518">
    <property type="entry name" value="Arginosuc_synth"/>
</dbReference>
<dbReference type="InterPro" id="IPR018223">
    <property type="entry name" value="Arginosuc_synth_CS"/>
</dbReference>
<dbReference type="InterPro" id="IPR023434">
    <property type="entry name" value="Arginosuc_synth_type_1_subfam"/>
</dbReference>
<dbReference type="InterPro" id="IPR024074">
    <property type="entry name" value="AS_cat/multimer_dom_body"/>
</dbReference>
<dbReference type="InterPro" id="IPR024073">
    <property type="entry name" value="AS_multimer_C_tail"/>
</dbReference>
<dbReference type="InterPro" id="IPR014729">
    <property type="entry name" value="Rossmann-like_a/b/a_fold"/>
</dbReference>
<dbReference type="NCBIfam" id="TIGR00032">
    <property type="entry name" value="argG"/>
    <property type="match status" value="1"/>
</dbReference>
<dbReference type="NCBIfam" id="NF003779">
    <property type="entry name" value="PRK05370.1"/>
    <property type="match status" value="1"/>
</dbReference>
<dbReference type="PANTHER" id="PTHR11587">
    <property type="entry name" value="ARGININOSUCCINATE SYNTHASE"/>
    <property type="match status" value="1"/>
</dbReference>
<dbReference type="PANTHER" id="PTHR11587:SF2">
    <property type="entry name" value="ARGININOSUCCINATE SYNTHASE"/>
    <property type="match status" value="1"/>
</dbReference>
<dbReference type="Pfam" id="PF20979">
    <property type="entry name" value="Arginosuc_syn_C"/>
    <property type="match status" value="1"/>
</dbReference>
<dbReference type="Pfam" id="PF00764">
    <property type="entry name" value="Arginosuc_synth"/>
    <property type="match status" value="1"/>
</dbReference>
<dbReference type="SUPFAM" id="SSF52402">
    <property type="entry name" value="Adenine nucleotide alpha hydrolases-like"/>
    <property type="match status" value="1"/>
</dbReference>
<dbReference type="SUPFAM" id="SSF69864">
    <property type="entry name" value="Argininosuccinate synthetase, C-terminal domain"/>
    <property type="match status" value="1"/>
</dbReference>
<dbReference type="PROSITE" id="PS00564">
    <property type="entry name" value="ARGININOSUCCIN_SYN_1"/>
    <property type="match status" value="1"/>
</dbReference>
<dbReference type="PROSITE" id="PS00565">
    <property type="entry name" value="ARGININOSUCCIN_SYN_2"/>
    <property type="match status" value="1"/>
</dbReference>
<gene>
    <name evidence="1" type="primary">argG</name>
    <name type="ordered locus">RPD_0713</name>
</gene>
<proteinExistence type="inferred from homology"/>